<protein>
    <recommendedName>
        <fullName>Glandular kallikrein-3, submandibular</fullName>
        <shortName>rGK-3</shortName>
        <ecNumber>3.4.21.35</ecNumber>
    </recommendedName>
    <alternativeName>
        <fullName>RSGK-50</fullName>
    </alternativeName>
    <alternativeName>
        <fullName>S1 kallikrein</fullName>
    </alternativeName>
    <alternativeName>
        <fullName>Tissue kallikrein</fullName>
    </alternativeName>
</protein>
<proteinExistence type="evidence at transcript level"/>
<name>KLK3_RAT</name>
<accession>P15950</accession>
<comment type="function">
    <text>Glandular kallikreins cleave Met-Lys and Arg-Ser bonds in kininogen to release Lys-bradykinin.</text>
</comment>
<comment type="catalytic activity">
    <reaction>
        <text>Preferential cleavage of Arg-|-Xaa bonds in small molecule substrates. Highly selective action to release kallidin (lysyl-bradykinin) from kininogen involves hydrolysis of Met-|-Xaa or Leu-|-Xaa.</text>
        <dbReference type="EC" id="3.4.21.35"/>
    </reaction>
</comment>
<comment type="similarity">
    <text evidence="2">Belongs to the peptidase S1 family. Kallikrein subfamily.</text>
</comment>
<sequence length="188" mass="20986">NYHVLLGQNNLSEDVQHRLVSQSFRHPDYKPFLMRNHTRKPKDYSNDLMLLHLSEPADITDGVKVIDLPTKEPKVGSTCLVSGWGSTNPSEWEFPDDLQCVNIHLLSNEKCIKAYKEKVTDLMLCAGELEGGKDTCRGDSGGPLICDGVLQGITSWGSVPCGEPNKPGIYTKLIKFTSWIKEVMKENP</sequence>
<evidence type="ECO:0000255" key="1"/>
<evidence type="ECO:0000255" key="2">
    <source>
        <dbReference type="PROSITE-ProRule" id="PRU00274"/>
    </source>
</evidence>
<evidence type="ECO:0000305" key="3"/>
<feature type="chain" id="PRO_0000088702" description="Glandular kallikrein-3, submandibular">
    <location>
        <begin position="1" status="less than"/>
        <end position="188"/>
    </location>
</feature>
<feature type="domain" description="Peptidase S1" evidence="2">
    <location>
        <begin position="1" status="less than"/>
        <end position="185"/>
    </location>
</feature>
<feature type="active site" description="Charge relay system">
    <location>
        <position position="47"/>
    </location>
</feature>
<feature type="active site" description="Charge relay system">
    <location>
        <position position="140"/>
    </location>
</feature>
<feature type="glycosylation site" description="N-linked (GlcNAc...) asparagine" evidence="1">
    <location>
        <position position="10"/>
    </location>
</feature>
<feature type="glycosylation site" description="N-linked (GlcNAc...) asparagine" evidence="1">
    <location>
        <position position="36"/>
    </location>
</feature>
<feature type="disulfide bond" evidence="2">
    <location>
        <begin position="79"/>
        <end position="146"/>
    </location>
</feature>
<feature type="disulfide bond" evidence="2">
    <location>
        <begin position="111"/>
        <end position="125"/>
    </location>
</feature>
<feature type="disulfide bond" evidence="2">
    <location>
        <begin position="136"/>
        <end position="161"/>
    </location>
</feature>
<feature type="sequence conflict" description="In Ref. 2; AAA41465." evidence="3" ref="2">
    <original>MR</original>
    <variation>IW</variation>
    <location>
        <begin position="34"/>
        <end position="35"/>
    </location>
</feature>
<feature type="sequence conflict" description="In Ref. 2; AAA41465." evidence="3" ref="2">
    <original>K</original>
    <variation>G</variation>
    <location>
        <position position="42"/>
    </location>
</feature>
<feature type="sequence conflict" description="In Ref. 1; AAA42080." evidence="3" ref="1">
    <original>E</original>
    <variation>K</variation>
    <location>
        <position position="186"/>
    </location>
</feature>
<feature type="non-terminal residue">
    <location>
        <position position="1"/>
    </location>
</feature>
<keyword id="KW-1015">Disulfide bond</keyword>
<keyword id="KW-0325">Glycoprotein</keyword>
<keyword id="KW-0378">Hydrolase</keyword>
<keyword id="KW-0645">Protease</keyword>
<keyword id="KW-1185">Reference proteome</keyword>
<keyword id="KW-0720">Serine protease</keyword>
<gene>
    <name type="primary">Klk3</name>
    <name type="synonym">Klk-3</name>
</gene>
<organism>
    <name type="scientific">Rattus norvegicus</name>
    <name type="common">Rat</name>
    <dbReference type="NCBI Taxonomy" id="10116"/>
    <lineage>
        <taxon>Eukaryota</taxon>
        <taxon>Metazoa</taxon>
        <taxon>Chordata</taxon>
        <taxon>Craniata</taxon>
        <taxon>Vertebrata</taxon>
        <taxon>Euteleostomi</taxon>
        <taxon>Mammalia</taxon>
        <taxon>Eutheria</taxon>
        <taxon>Euarchontoglires</taxon>
        <taxon>Glires</taxon>
        <taxon>Rodentia</taxon>
        <taxon>Myomorpha</taxon>
        <taxon>Muroidea</taxon>
        <taxon>Muridae</taxon>
        <taxon>Murinae</taxon>
        <taxon>Rattus</taxon>
    </lineage>
</organism>
<reference key="1">
    <citation type="journal article" date="1989" name="Biochemistry">
        <title>Characterization of genes encoding rat tonin and a kallikrein-like serine protease.</title>
        <authorList>
            <person name="Shai S.Y."/>
            <person name="Woodley-Miller C."/>
            <person name="Chao J."/>
            <person name="Chao L."/>
        </authorList>
    </citation>
    <scope>NUCLEOTIDE SEQUENCE [GENOMIC DNA]</scope>
</reference>
<reference key="2">
    <citation type="journal article" date="1985" name="Biochemistry">
        <title>Kallikrein-related mRNAs of the rat submaxillary gland: nucleotide sequences of four distinct types including tonin.</title>
        <authorList>
            <person name="Ashley P.L."/>
            <person name="MacDonald R.J."/>
        </authorList>
    </citation>
    <scope>NUCLEOTIDE SEQUENCE [MRNA] OF 33-188</scope>
</reference>
<dbReference type="EC" id="3.4.21.35"/>
<dbReference type="EMBL" id="M26534">
    <property type="protein sequence ID" value="AAA42080.1"/>
    <property type="molecule type" value="Genomic_DNA"/>
</dbReference>
<dbReference type="EMBL" id="M11564">
    <property type="protein sequence ID" value="AAA41465.1"/>
    <property type="molecule type" value="mRNA"/>
</dbReference>
<dbReference type="PIR" id="B23863">
    <property type="entry name" value="B23863"/>
</dbReference>
<dbReference type="PIR" id="B32340">
    <property type="entry name" value="B32340"/>
</dbReference>
<dbReference type="SMR" id="P15950"/>
<dbReference type="FunCoup" id="P15950">
    <property type="interactions" value="24"/>
</dbReference>
<dbReference type="MEROPS" id="S01.411"/>
<dbReference type="GlyCosmos" id="P15950">
    <property type="glycosylation" value="2 sites, No reported glycans"/>
</dbReference>
<dbReference type="GlyGen" id="P15950">
    <property type="glycosylation" value="2 sites"/>
</dbReference>
<dbReference type="PhosphoSitePlus" id="P15950"/>
<dbReference type="PaxDb" id="10116-ENSRNOP00000025777"/>
<dbReference type="AGR" id="RGD:735032"/>
<dbReference type="eggNOG" id="KOG3627">
    <property type="taxonomic scope" value="Eukaryota"/>
</dbReference>
<dbReference type="InParanoid" id="P15950"/>
<dbReference type="PhylomeDB" id="P15950"/>
<dbReference type="TreeFam" id="TF331065"/>
<dbReference type="BRENDA" id="3.4.21.77">
    <property type="organism ID" value="5301"/>
</dbReference>
<dbReference type="Proteomes" id="UP000002494">
    <property type="component" value="Unplaced"/>
</dbReference>
<dbReference type="GO" id="GO:0005615">
    <property type="term" value="C:extracellular space"/>
    <property type="evidence" value="ECO:0000318"/>
    <property type="project" value="GO_Central"/>
</dbReference>
<dbReference type="GO" id="GO:0030141">
    <property type="term" value="C:secretory granule"/>
    <property type="evidence" value="ECO:0000318"/>
    <property type="project" value="GO_Central"/>
</dbReference>
<dbReference type="GO" id="GO:0004252">
    <property type="term" value="F:serine-type endopeptidase activity"/>
    <property type="evidence" value="ECO:0000318"/>
    <property type="project" value="GO_Central"/>
</dbReference>
<dbReference type="GO" id="GO:0003073">
    <property type="term" value="P:regulation of systemic arterial blood pressure"/>
    <property type="evidence" value="ECO:0000318"/>
    <property type="project" value="GO_Central"/>
</dbReference>
<dbReference type="GO" id="GO:0031638">
    <property type="term" value="P:zymogen activation"/>
    <property type="evidence" value="ECO:0000318"/>
    <property type="project" value="GO_Central"/>
</dbReference>
<dbReference type="CDD" id="cd00190">
    <property type="entry name" value="Tryp_SPc"/>
    <property type="match status" value="1"/>
</dbReference>
<dbReference type="FunFam" id="2.40.10.10:FF:000010">
    <property type="entry name" value="Kallikrein related peptidase 11"/>
    <property type="match status" value="1"/>
</dbReference>
<dbReference type="Gene3D" id="2.40.10.10">
    <property type="entry name" value="Trypsin-like serine proteases"/>
    <property type="match status" value="2"/>
</dbReference>
<dbReference type="InterPro" id="IPR009003">
    <property type="entry name" value="Peptidase_S1_PA"/>
</dbReference>
<dbReference type="InterPro" id="IPR043504">
    <property type="entry name" value="Peptidase_S1_PA_chymotrypsin"/>
</dbReference>
<dbReference type="InterPro" id="IPR001314">
    <property type="entry name" value="Peptidase_S1A"/>
</dbReference>
<dbReference type="InterPro" id="IPR001254">
    <property type="entry name" value="Trypsin_dom"/>
</dbReference>
<dbReference type="InterPro" id="IPR033116">
    <property type="entry name" value="TRYPSIN_SER"/>
</dbReference>
<dbReference type="PANTHER" id="PTHR24271:SF47">
    <property type="entry name" value="KALLIKREIN-1"/>
    <property type="match status" value="1"/>
</dbReference>
<dbReference type="PANTHER" id="PTHR24271">
    <property type="entry name" value="KALLIKREIN-RELATED"/>
    <property type="match status" value="1"/>
</dbReference>
<dbReference type="Pfam" id="PF00089">
    <property type="entry name" value="Trypsin"/>
    <property type="match status" value="1"/>
</dbReference>
<dbReference type="PRINTS" id="PR00722">
    <property type="entry name" value="CHYMOTRYPSIN"/>
</dbReference>
<dbReference type="SMART" id="SM00020">
    <property type="entry name" value="Tryp_SPc"/>
    <property type="match status" value="1"/>
</dbReference>
<dbReference type="SUPFAM" id="SSF50494">
    <property type="entry name" value="Trypsin-like serine proteases"/>
    <property type="match status" value="1"/>
</dbReference>
<dbReference type="PROSITE" id="PS50240">
    <property type="entry name" value="TRYPSIN_DOM"/>
    <property type="match status" value="1"/>
</dbReference>
<dbReference type="PROSITE" id="PS00135">
    <property type="entry name" value="TRYPSIN_SER"/>
    <property type="match status" value="1"/>
</dbReference>